<feature type="chain" id="PRO_0000235164" description="Leucine-rich repeat-containing protein 59">
    <location>
        <begin position="1"/>
        <end position="307"/>
    </location>
</feature>
<feature type="topological domain" description="Cytoplasmic" evidence="2">
    <location>
        <begin position="1"/>
        <end position="247"/>
    </location>
</feature>
<feature type="transmembrane region" description="Helical" evidence="2">
    <location>
        <begin position="248"/>
        <end position="268"/>
    </location>
</feature>
<feature type="topological domain" description="Lumenal" evidence="2">
    <location>
        <begin position="269"/>
        <end position="307"/>
    </location>
</feature>
<feature type="repeat" description="LRR 1">
    <location>
        <begin position="10"/>
        <end position="31"/>
    </location>
</feature>
<feature type="repeat" description="LRR 2">
    <location>
        <begin position="40"/>
        <end position="61"/>
    </location>
</feature>
<feature type="repeat" description="LRR 3">
    <location>
        <begin position="63"/>
        <end position="84"/>
    </location>
</feature>
<feature type="repeat" description="LRR 4">
    <location>
        <begin position="86"/>
        <end position="107"/>
    </location>
</feature>
<feature type="repeat" description="LRR 5">
    <location>
        <begin position="109"/>
        <end position="131"/>
    </location>
</feature>
<feature type="region of interest" description="Disordered" evidence="3">
    <location>
        <begin position="170"/>
        <end position="238"/>
    </location>
</feature>
<feature type="coiled-coil region" evidence="2">
    <location>
        <begin position="156"/>
        <end position="222"/>
    </location>
</feature>
<feature type="compositionally biased region" description="Basic and acidic residues" evidence="3">
    <location>
        <begin position="174"/>
        <end position="187"/>
    </location>
</feature>
<feature type="compositionally biased region" description="Basic and acidic residues" evidence="3">
    <location>
        <begin position="194"/>
        <end position="238"/>
    </location>
</feature>
<name>LRC59_XENLA</name>
<evidence type="ECO:0000250" key="1"/>
<evidence type="ECO:0000255" key="2"/>
<evidence type="ECO:0000256" key="3">
    <source>
        <dbReference type="SAM" id="MobiDB-lite"/>
    </source>
</evidence>
<dbReference type="EMBL" id="BC041285">
    <property type="protein sequence ID" value="AAH41285.1"/>
    <property type="molecule type" value="mRNA"/>
</dbReference>
<dbReference type="RefSeq" id="NP_001079394.1">
    <property type="nucleotide sequence ID" value="NM_001085925.1"/>
</dbReference>
<dbReference type="SMR" id="Q8AVS8"/>
<dbReference type="DNASU" id="379081"/>
<dbReference type="GeneID" id="379081"/>
<dbReference type="KEGG" id="xla:379081"/>
<dbReference type="AGR" id="Xenbase:XB-GENE-963192"/>
<dbReference type="CTD" id="379081"/>
<dbReference type="Xenbase" id="XB-GENE-963192">
    <property type="gene designation" value="lrrc59.S"/>
</dbReference>
<dbReference type="OrthoDB" id="1394818at2759"/>
<dbReference type="Proteomes" id="UP000186698">
    <property type="component" value="Chromosome 9_10S"/>
</dbReference>
<dbReference type="Bgee" id="379081">
    <property type="expression patterns" value="Expressed in neurula embryo and 19 other cell types or tissues"/>
</dbReference>
<dbReference type="GO" id="GO:0005789">
    <property type="term" value="C:endoplasmic reticulum membrane"/>
    <property type="evidence" value="ECO:0007669"/>
    <property type="project" value="UniProtKB-SubCell"/>
</dbReference>
<dbReference type="GO" id="GO:0005635">
    <property type="term" value="C:nuclear envelope"/>
    <property type="evidence" value="ECO:0007669"/>
    <property type="project" value="UniProtKB-SubCell"/>
</dbReference>
<dbReference type="FunFam" id="3.80.10.10:FF:000645">
    <property type="entry name" value="Leucine-rich repeat-containing protein 59"/>
    <property type="match status" value="1"/>
</dbReference>
<dbReference type="Gene3D" id="3.80.10.10">
    <property type="entry name" value="Ribonuclease Inhibitor"/>
    <property type="match status" value="1"/>
</dbReference>
<dbReference type="InterPro" id="IPR001611">
    <property type="entry name" value="Leu-rich_rpt"/>
</dbReference>
<dbReference type="InterPro" id="IPR003591">
    <property type="entry name" value="Leu-rich_rpt_typical-subtyp"/>
</dbReference>
<dbReference type="InterPro" id="IPR050715">
    <property type="entry name" value="LRR-SigEffector_domain"/>
</dbReference>
<dbReference type="InterPro" id="IPR032675">
    <property type="entry name" value="LRR_dom_sf"/>
</dbReference>
<dbReference type="PANTHER" id="PTHR45752">
    <property type="entry name" value="LEUCINE-RICH REPEAT-CONTAINING"/>
    <property type="match status" value="1"/>
</dbReference>
<dbReference type="PANTHER" id="PTHR45752:SF4">
    <property type="entry name" value="LEUCINE-RICH REPEAT-CONTAINING PROTEIN 59"/>
    <property type="match status" value="1"/>
</dbReference>
<dbReference type="Pfam" id="PF00560">
    <property type="entry name" value="LRR_1"/>
    <property type="match status" value="1"/>
</dbReference>
<dbReference type="Pfam" id="PF13855">
    <property type="entry name" value="LRR_8"/>
    <property type="match status" value="1"/>
</dbReference>
<dbReference type="SMART" id="SM00369">
    <property type="entry name" value="LRR_TYP"/>
    <property type="match status" value="4"/>
</dbReference>
<dbReference type="SUPFAM" id="SSF52058">
    <property type="entry name" value="L domain-like"/>
    <property type="match status" value="1"/>
</dbReference>
<dbReference type="PROSITE" id="PS51450">
    <property type="entry name" value="LRR"/>
    <property type="match status" value="4"/>
</dbReference>
<accession>Q8AVS8</accession>
<proteinExistence type="evidence at transcript level"/>
<gene>
    <name type="primary">lrrc59</name>
</gene>
<organism>
    <name type="scientific">Xenopus laevis</name>
    <name type="common">African clawed frog</name>
    <dbReference type="NCBI Taxonomy" id="8355"/>
    <lineage>
        <taxon>Eukaryota</taxon>
        <taxon>Metazoa</taxon>
        <taxon>Chordata</taxon>
        <taxon>Craniata</taxon>
        <taxon>Vertebrata</taxon>
        <taxon>Euteleostomi</taxon>
        <taxon>Amphibia</taxon>
        <taxon>Batrachia</taxon>
        <taxon>Anura</taxon>
        <taxon>Pipoidea</taxon>
        <taxon>Pipidae</taxon>
        <taxon>Xenopodinae</taxon>
        <taxon>Xenopus</taxon>
        <taxon>Xenopus</taxon>
    </lineage>
</organism>
<protein>
    <recommendedName>
        <fullName>Leucine-rich repeat-containing protein 59</fullName>
    </recommendedName>
</protein>
<sequence>MARANGRSQNLRDKLDGNELDLSLSDLSEVPVRDLVAIPKATALDLSCNKLTTLPDDFCNLSHIVRLDLSKNQIVQLPSEFGRLMNLQHLDLLQNHLMSLPVSFAQLKSLKWLDLKDNPLKPDLAKVAGDCLDEKQCKECAQRVLQYMKSVQSDHEIELQRKLQLDKERKKKLEAKQRVKEEQEREMRKRKKQQQKERKRRDYNAMQEAERALNSNKKAEEEPTENHKRMATPKEKKLAQRQSRLRKIACILLFGLLVVLLVVVACRFTDLKAINMCTSVNAIYKETLSALHSNPVLERFLQDPSSQ</sequence>
<comment type="function">
    <text evidence="1">Required for nuclear import of FGF1.</text>
</comment>
<comment type="subunit">
    <text evidence="1">Interacts with SGO1.</text>
</comment>
<comment type="subcellular location">
    <subcellularLocation>
        <location evidence="1">Microsome membrane</location>
        <topology evidence="1">Single-pass type II membrane protein</topology>
    </subcellularLocation>
    <subcellularLocation>
        <location evidence="1">Endoplasmic reticulum membrane</location>
        <topology evidence="1">Single-pass type II membrane protein</topology>
    </subcellularLocation>
    <subcellularLocation>
        <location evidence="1">Nucleus envelope</location>
    </subcellularLocation>
    <text evidence="1">Localization in the nuclear envelope depends upon the nuclear import machinery.</text>
</comment>
<reference key="1">
    <citation type="submission" date="2002-12" db="EMBL/GenBank/DDBJ databases">
        <authorList>
            <consortium name="NIH - Xenopus Gene Collection (XGC) project"/>
        </authorList>
    </citation>
    <scope>NUCLEOTIDE SEQUENCE [LARGE SCALE MRNA]</scope>
    <source>
        <tissue>Embryo</tissue>
    </source>
</reference>
<keyword id="KW-0175">Coiled coil</keyword>
<keyword id="KW-0256">Endoplasmic reticulum</keyword>
<keyword id="KW-0433">Leucine-rich repeat</keyword>
<keyword id="KW-0472">Membrane</keyword>
<keyword id="KW-0492">Microsome</keyword>
<keyword id="KW-0539">Nucleus</keyword>
<keyword id="KW-1185">Reference proteome</keyword>
<keyword id="KW-0677">Repeat</keyword>
<keyword id="KW-0735">Signal-anchor</keyword>
<keyword id="KW-0812">Transmembrane</keyword>
<keyword id="KW-1133">Transmembrane helix</keyword>